<protein>
    <recommendedName>
        <fullName>NADH dehydrogenase (ubiquinone) complex I, assembly factor 6 homolog</fullName>
    </recommendedName>
</protein>
<evidence type="ECO:0000250" key="1"/>
<evidence type="ECO:0000255" key="2"/>
<evidence type="ECO:0000305" key="3"/>
<reference key="1">
    <citation type="journal article" date="2005" name="Nature">
        <title>The genome of the social amoeba Dictyostelium discoideum.</title>
        <authorList>
            <person name="Eichinger L."/>
            <person name="Pachebat J.A."/>
            <person name="Gloeckner G."/>
            <person name="Rajandream M.A."/>
            <person name="Sucgang R."/>
            <person name="Berriman M."/>
            <person name="Song J."/>
            <person name="Olsen R."/>
            <person name="Szafranski K."/>
            <person name="Xu Q."/>
            <person name="Tunggal B."/>
            <person name="Kummerfeld S."/>
            <person name="Madera M."/>
            <person name="Konfortov B.A."/>
            <person name="Rivero F."/>
            <person name="Bankier A.T."/>
            <person name="Lehmann R."/>
            <person name="Hamlin N."/>
            <person name="Davies R."/>
            <person name="Gaudet P."/>
            <person name="Fey P."/>
            <person name="Pilcher K."/>
            <person name="Chen G."/>
            <person name="Saunders D."/>
            <person name="Sodergren E.J."/>
            <person name="Davis P."/>
            <person name="Kerhornou A."/>
            <person name="Nie X."/>
            <person name="Hall N."/>
            <person name="Anjard C."/>
            <person name="Hemphill L."/>
            <person name="Bason N."/>
            <person name="Farbrother P."/>
            <person name="Desany B."/>
            <person name="Just E."/>
            <person name="Morio T."/>
            <person name="Rost R."/>
            <person name="Churcher C.M."/>
            <person name="Cooper J."/>
            <person name="Haydock S."/>
            <person name="van Driessche N."/>
            <person name="Cronin A."/>
            <person name="Goodhead I."/>
            <person name="Muzny D.M."/>
            <person name="Mourier T."/>
            <person name="Pain A."/>
            <person name="Lu M."/>
            <person name="Harper D."/>
            <person name="Lindsay R."/>
            <person name="Hauser H."/>
            <person name="James K.D."/>
            <person name="Quiles M."/>
            <person name="Madan Babu M."/>
            <person name="Saito T."/>
            <person name="Buchrieser C."/>
            <person name="Wardroper A."/>
            <person name="Felder M."/>
            <person name="Thangavelu M."/>
            <person name="Johnson D."/>
            <person name="Knights A."/>
            <person name="Loulseged H."/>
            <person name="Mungall K.L."/>
            <person name="Oliver K."/>
            <person name="Price C."/>
            <person name="Quail M.A."/>
            <person name="Urushihara H."/>
            <person name="Hernandez J."/>
            <person name="Rabbinowitsch E."/>
            <person name="Steffen D."/>
            <person name="Sanders M."/>
            <person name="Ma J."/>
            <person name="Kohara Y."/>
            <person name="Sharp S."/>
            <person name="Simmonds M.N."/>
            <person name="Spiegler S."/>
            <person name="Tivey A."/>
            <person name="Sugano S."/>
            <person name="White B."/>
            <person name="Walker D."/>
            <person name="Woodward J.R."/>
            <person name="Winckler T."/>
            <person name="Tanaka Y."/>
            <person name="Shaulsky G."/>
            <person name="Schleicher M."/>
            <person name="Weinstock G.M."/>
            <person name="Rosenthal A."/>
            <person name="Cox E.C."/>
            <person name="Chisholm R.L."/>
            <person name="Gibbs R.A."/>
            <person name="Loomis W.F."/>
            <person name="Platzer M."/>
            <person name="Kay R.R."/>
            <person name="Williams J.G."/>
            <person name="Dear P.H."/>
            <person name="Noegel A.A."/>
            <person name="Barrell B.G."/>
            <person name="Kuspa A."/>
        </authorList>
    </citation>
    <scope>NUCLEOTIDE SEQUENCE [LARGE SCALE GENOMIC DNA]</scope>
    <source>
        <strain>AX4</strain>
    </source>
</reference>
<comment type="function">
    <text evidence="1">Involved in the assembly of mitochondrial NADH:ubiquinone oxidoreductase complex (complex I) at early stages.</text>
</comment>
<comment type="subcellular location">
    <subcellularLocation>
        <location evidence="1">Mitochondrion inner membrane</location>
    </subcellularLocation>
</comment>
<comment type="similarity">
    <text evidence="3">Belongs to the NDUFAF6 family.</text>
</comment>
<proteinExistence type="inferred from homology"/>
<keyword id="KW-0472">Membrane</keyword>
<keyword id="KW-0496">Mitochondrion</keyword>
<keyword id="KW-0999">Mitochondrion inner membrane</keyword>
<keyword id="KW-1185">Reference proteome</keyword>
<keyword id="KW-0809">Transit peptide</keyword>
<dbReference type="EMBL" id="AAFI02000185">
    <property type="protein sequence ID" value="EAL61547.1"/>
    <property type="molecule type" value="Genomic_DNA"/>
</dbReference>
<dbReference type="RefSeq" id="XP_629939.1">
    <property type="nucleotide sequence ID" value="XM_629937.1"/>
</dbReference>
<dbReference type="SMR" id="Q54E48"/>
<dbReference type="FunCoup" id="Q54E48">
    <property type="interactions" value="154"/>
</dbReference>
<dbReference type="STRING" id="44689.Q54E48"/>
<dbReference type="PaxDb" id="44689-DDB0267055"/>
<dbReference type="EnsemblProtists" id="EAL61547">
    <property type="protein sequence ID" value="EAL61547"/>
    <property type="gene ID" value="DDB_G0291852"/>
</dbReference>
<dbReference type="GeneID" id="8628345"/>
<dbReference type="KEGG" id="ddi:DDB_G0291852"/>
<dbReference type="dictyBase" id="DDB_G0291852"/>
<dbReference type="VEuPathDB" id="AmoebaDB:DDB_G0291852"/>
<dbReference type="eggNOG" id="KOG4411">
    <property type="taxonomic scope" value="Eukaryota"/>
</dbReference>
<dbReference type="HOGENOM" id="CLU_037269_6_2_1"/>
<dbReference type="InParanoid" id="Q54E48"/>
<dbReference type="OMA" id="MINAREQ"/>
<dbReference type="PhylomeDB" id="Q54E48"/>
<dbReference type="PRO" id="PR:Q54E48"/>
<dbReference type="Proteomes" id="UP000002195">
    <property type="component" value="Chromosome 6"/>
</dbReference>
<dbReference type="GO" id="GO:0005743">
    <property type="term" value="C:mitochondrial inner membrane"/>
    <property type="evidence" value="ECO:0007669"/>
    <property type="project" value="UniProtKB-SubCell"/>
</dbReference>
<dbReference type="GO" id="GO:0005739">
    <property type="term" value="C:mitochondrion"/>
    <property type="evidence" value="ECO:0000318"/>
    <property type="project" value="GO_Central"/>
</dbReference>
<dbReference type="GO" id="GO:0009058">
    <property type="term" value="P:biosynthetic process"/>
    <property type="evidence" value="ECO:0007669"/>
    <property type="project" value="InterPro"/>
</dbReference>
<dbReference type="GO" id="GO:0032981">
    <property type="term" value="P:mitochondrial respiratory chain complex I assembly"/>
    <property type="evidence" value="ECO:0000318"/>
    <property type="project" value="GO_Central"/>
</dbReference>
<dbReference type="FunFam" id="1.10.600.10:FF:000074">
    <property type="entry name" value="NADH dehydrogenase (ubiquinone) complex I, assembly factor 6 homolog"/>
    <property type="match status" value="1"/>
</dbReference>
<dbReference type="Gene3D" id="1.10.600.10">
    <property type="entry name" value="Farnesyl Diphosphate Synthase"/>
    <property type="match status" value="1"/>
</dbReference>
<dbReference type="InterPro" id="IPR008949">
    <property type="entry name" value="Isoprenoid_synthase_dom_sf"/>
</dbReference>
<dbReference type="InterPro" id="IPR002060">
    <property type="entry name" value="Squ/phyt_synthse"/>
</dbReference>
<dbReference type="Pfam" id="PF00494">
    <property type="entry name" value="SQS_PSY"/>
    <property type="match status" value="1"/>
</dbReference>
<dbReference type="SUPFAM" id="SSF48576">
    <property type="entry name" value="Terpenoid synthases"/>
    <property type="match status" value="1"/>
</dbReference>
<feature type="transit peptide" description="Mitochondrion" evidence="2">
    <location>
        <begin position="1"/>
        <end position="41"/>
    </location>
</feature>
<feature type="chain" id="PRO_0000327443" description="NADH dehydrogenase (ubiquinone) complex I, assembly factor 6 homolog">
    <location>
        <begin position="42"/>
        <end position="356"/>
    </location>
</feature>
<gene>
    <name type="ORF">DDB_G0291852</name>
</gene>
<sequence length="356" mass="40811">MIRNSGRILFNSLKNSNVKLINRNVIINSNIRLFSTSTNNTIKESVEKKAETISNKDNIASPSSKSIDVSDLAGNADYNFVFERIKTCDKENYINSLLISDPIARRVAYAIRAFNIETVANDHSPKSEKISRLRLSFWKDAINNIYNGKVYDQPLTRVLAQVIKEKKLTKTWFIKILNRREKDNQQVQIKDMEELEQYADDIHSSLMLLTLEGLGVKGNHDVEHCASHLGKAIGIMVLIRGTVYHLASRKTYIPVSLTTKYGINVESLYRGDPQIEKLQNAIYEMASCAKLHLDKAKQFRGKIPHPATEAFLSVSVVEDFLERLRKADFNIFEFPNTQQHPLLLIKLYKNKFFKQF</sequence>
<organism>
    <name type="scientific">Dictyostelium discoideum</name>
    <name type="common">Social amoeba</name>
    <dbReference type="NCBI Taxonomy" id="44689"/>
    <lineage>
        <taxon>Eukaryota</taxon>
        <taxon>Amoebozoa</taxon>
        <taxon>Evosea</taxon>
        <taxon>Eumycetozoa</taxon>
        <taxon>Dictyostelia</taxon>
        <taxon>Dictyosteliales</taxon>
        <taxon>Dictyosteliaceae</taxon>
        <taxon>Dictyostelium</taxon>
    </lineage>
</organism>
<name>NDUF6_DICDI</name>
<accession>Q54E48</accession>